<name>P2699_TITST</name>
<dbReference type="GO" id="GO:0005576">
    <property type="term" value="C:extracellular region"/>
    <property type="evidence" value="ECO:0007669"/>
    <property type="project" value="UniProtKB-SubCell"/>
</dbReference>
<sequence>KPAPEPAPEPAPEAAPEA</sequence>
<feature type="peptide" id="PRO_0000366106" description="Peptide 2699">
    <location>
        <begin position="1"/>
        <end position="18" status="greater than"/>
    </location>
</feature>
<feature type="non-terminal residue">
    <location>
        <position position="18"/>
    </location>
</feature>
<evidence type="ECO:0000269" key="1">
    <source>
    </source>
</evidence>
<protein>
    <recommendedName>
        <fullName>Peptide 2699</fullName>
    </recommendedName>
</protein>
<proteinExistence type="evidence at protein level"/>
<comment type="subcellular location">
    <subcellularLocation>
        <location>Secreted</location>
    </subcellularLocation>
</comment>
<comment type="tissue specificity">
    <text>Expressed by the venom gland.</text>
</comment>
<comment type="mass spectrometry"/>
<accession>P0C8W8</accession>
<organism>
    <name type="scientific">Tityus stigmurus</name>
    <name type="common">Brazilian scorpion</name>
    <dbReference type="NCBI Taxonomy" id="50344"/>
    <lineage>
        <taxon>Eukaryota</taxon>
        <taxon>Metazoa</taxon>
        <taxon>Ecdysozoa</taxon>
        <taxon>Arthropoda</taxon>
        <taxon>Chelicerata</taxon>
        <taxon>Arachnida</taxon>
        <taxon>Scorpiones</taxon>
        <taxon>Buthida</taxon>
        <taxon>Buthoidea</taxon>
        <taxon>Buthidae</taxon>
        <taxon>Tityus</taxon>
    </lineage>
</organism>
<keyword id="KW-0903">Direct protein sequencing</keyword>
<keyword id="KW-0964">Secreted</keyword>
<reference key="1">
    <citation type="journal article" date="2007" name="Comp. Biochem. Physiol.">
        <title>Proteomic analysis of the venom from the scorpion Tityus stigmurus: biochemical and physiological comparison with other Tityus species.</title>
        <authorList>
            <person name="Batista C.V.F."/>
            <person name="Roman-Gonzalez S.A."/>
            <person name="Salas-Castillo S.P."/>
            <person name="Zamudio F.Z."/>
            <person name="Gomez-Lagunas F."/>
            <person name="Possani L.D."/>
        </authorList>
    </citation>
    <scope>PROTEIN SEQUENCE</scope>
    <scope>MASS SPECTROMETRY</scope>
    <source>
        <tissue>Venom</tissue>
    </source>
</reference>